<organism>
    <name type="scientific">Mus musculus</name>
    <name type="common">Mouse</name>
    <dbReference type="NCBI Taxonomy" id="10090"/>
    <lineage>
        <taxon>Eukaryota</taxon>
        <taxon>Metazoa</taxon>
        <taxon>Chordata</taxon>
        <taxon>Craniata</taxon>
        <taxon>Vertebrata</taxon>
        <taxon>Euteleostomi</taxon>
        <taxon>Mammalia</taxon>
        <taxon>Eutheria</taxon>
        <taxon>Euarchontoglires</taxon>
        <taxon>Glires</taxon>
        <taxon>Rodentia</taxon>
        <taxon>Myomorpha</taxon>
        <taxon>Muroidea</taxon>
        <taxon>Muridae</taxon>
        <taxon>Murinae</taxon>
        <taxon>Mus</taxon>
        <taxon>Mus</taxon>
    </lineage>
</organism>
<gene>
    <name type="primary">Pomt1</name>
</gene>
<protein>
    <recommendedName>
        <fullName>Protein O-mannosyl-transferase 1</fullName>
        <ecNumber>2.4.1.109</ecNumber>
    </recommendedName>
    <alternativeName>
        <fullName>Dolichyl-phosphate-mannose--protein mannosyltransferase 1</fullName>
    </alternativeName>
</protein>
<comment type="function">
    <text evidence="2">Transfers mannosyl residues to the hydroxyl group of serine or threonine residues. Coexpression of both POMT1 and POMT2 is necessary for enzyme activity, expression of either POMT1 or POMT2 alone is insufficient. Essentially dedicated to O-mannosylation of alpha-DAG1 and few other proteins but not of cadherins and protocaherins.</text>
</comment>
<comment type="catalytic activity">
    <reaction evidence="2">
        <text>a di-trans,poly-cis-dolichyl beta-D-mannosyl phosphate + L-seryl-[protein] = 3-O-(alpha-D-mannosyl)-L-seryl-[protein] + a di-trans,poly-cis-dolichyl phosphate + H(+)</text>
        <dbReference type="Rhea" id="RHEA:17377"/>
        <dbReference type="Rhea" id="RHEA-COMP:9863"/>
        <dbReference type="Rhea" id="RHEA-COMP:13546"/>
        <dbReference type="Rhea" id="RHEA-COMP:19498"/>
        <dbReference type="Rhea" id="RHEA-COMP:19501"/>
        <dbReference type="ChEBI" id="CHEBI:15378"/>
        <dbReference type="ChEBI" id="CHEBI:29999"/>
        <dbReference type="ChEBI" id="CHEBI:57683"/>
        <dbReference type="ChEBI" id="CHEBI:58211"/>
        <dbReference type="ChEBI" id="CHEBI:137321"/>
        <dbReference type="EC" id="2.4.1.109"/>
    </reaction>
</comment>
<comment type="catalytic activity">
    <reaction evidence="2">
        <text>a di-trans,poly-cis-dolichyl beta-D-mannosyl phosphate + L-threonyl-[protein] = 3-O-(alpha-D-mannosyl)-L-threonyl-[protein] + a di-trans,poly-cis-dolichyl phosphate + H(+)</text>
        <dbReference type="Rhea" id="RHEA:53396"/>
        <dbReference type="Rhea" id="RHEA-COMP:11060"/>
        <dbReference type="Rhea" id="RHEA-COMP:13547"/>
        <dbReference type="Rhea" id="RHEA-COMP:19498"/>
        <dbReference type="Rhea" id="RHEA-COMP:19501"/>
        <dbReference type="ChEBI" id="CHEBI:15378"/>
        <dbReference type="ChEBI" id="CHEBI:30013"/>
        <dbReference type="ChEBI" id="CHEBI:57683"/>
        <dbReference type="ChEBI" id="CHEBI:58211"/>
        <dbReference type="ChEBI" id="CHEBI:137323"/>
        <dbReference type="EC" id="2.4.1.109"/>
    </reaction>
</comment>
<comment type="pathway">
    <text>Protein modification; protein glycosylation.</text>
</comment>
<comment type="subcellular location">
    <subcellularLocation>
        <location evidence="1">Endoplasmic reticulum membrane</location>
        <topology evidence="1">Multi-pass membrane protein</topology>
    </subcellularLocation>
</comment>
<comment type="developmental stage">
    <text evidence="5">Expressed ubiquitously at low level after 7.5 dpc. At 8.5 dpc high levels of expression are detected throughout the neural tube, and in the dorsal aspects of the neural folds of the future midbrain region and the somites. At 9.0 dpc high levels of expression are detected in the ventral domain of the neural tube, developing eye, floor plate, notochord, and gut endothelium. At 10.5 dpc expression high levels of expression are detected in the dermomyotome of the somites, limb-bud mesenchyme, mantle layer of the dorsal neural tube, and developing trigeminal ganglion.</text>
</comment>
<comment type="disruption phenotype">
    <text evidence="5">Mice suffer of developmental arrest around 7.5 dpc and die between 7.5 dpc and 9.5 dpc. Defects are observed in the formation of Reichert's membrane that are probably due to abnormal glycosylation and maturation of dystroglycan and impaired recruitment of laminin.</text>
</comment>
<comment type="similarity">
    <text evidence="6">Belongs to the glycosyltransferase 39 family.</text>
</comment>
<comment type="sequence caution" evidence="6">
    <conflict type="frameshift">
        <sequence resource="EMBL-CDS" id="BAC35577"/>
    </conflict>
</comment>
<dbReference type="EC" id="2.4.1.109"/>
<dbReference type="EMBL" id="AY007238">
    <property type="protein sequence ID" value="AAG15588.1"/>
    <property type="molecule type" value="mRNA"/>
</dbReference>
<dbReference type="EMBL" id="AY494857">
    <property type="protein sequence ID" value="AAS76201.1"/>
    <property type="molecule type" value="mRNA"/>
</dbReference>
<dbReference type="EMBL" id="AK053889">
    <property type="protein sequence ID" value="BAC35577.1"/>
    <property type="status" value="ALT_FRAME"/>
    <property type="molecule type" value="mRNA"/>
</dbReference>
<dbReference type="EMBL" id="AK134770">
    <property type="protein sequence ID" value="BAE22274.1"/>
    <property type="molecule type" value="mRNA"/>
</dbReference>
<dbReference type="EMBL" id="AK153984">
    <property type="protein sequence ID" value="BAE32295.1"/>
    <property type="molecule type" value="mRNA"/>
</dbReference>
<dbReference type="EMBL" id="BC027325">
    <property type="protein sequence ID" value="AAH27325.1"/>
    <property type="molecule type" value="mRNA"/>
</dbReference>
<dbReference type="CCDS" id="CCDS15908.1"/>
<dbReference type="RefSeq" id="NP_660127.1">
    <property type="nucleotide sequence ID" value="NM_145145.3"/>
</dbReference>
<dbReference type="SMR" id="Q8R2R1"/>
<dbReference type="BioGRID" id="221170">
    <property type="interactions" value="1"/>
</dbReference>
<dbReference type="FunCoup" id="Q8R2R1">
    <property type="interactions" value="856"/>
</dbReference>
<dbReference type="STRING" id="10090.ENSMUSP00000038722"/>
<dbReference type="CAZy" id="GT39">
    <property type="family name" value="Glycosyltransferase Family 39"/>
</dbReference>
<dbReference type="GlyConnect" id="2639">
    <property type="glycosylation" value="3 N-Linked glycans (1 site)"/>
</dbReference>
<dbReference type="GlyCosmos" id="Q8R2R1">
    <property type="glycosylation" value="3 sites, 3 glycans"/>
</dbReference>
<dbReference type="GlyGen" id="Q8R2R1">
    <property type="glycosylation" value="3 sites, 4 N-linked glycans (2 sites)"/>
</dbReference>
<dbReference type="iPTMnet" id="Q8R2R1"/>
<dbReference type="PhosphoSitePlus" id="Q8R2R1"/>
<dbReference type="SwissPalm" id="Q8R2R1"/>
<dbReference type="PaxDb" id="10090-ENSMUSP00000038722"/>
<dbReference type="PeptideAtlas" id="Q8R2R1"/>
<dbReference type="ProteomicsDB" id="289786"/>
<dbReference type="Pumba" id="Q8R2R1"/>
<dbReference type="Antibodypedia" id="31602">
    <property type="antibodies" value="192 antibodies from 27 providers"/>
</dbReference>
<dbReference type="DNASU" id="99011"/>
<dbReference type="Ensembl" id="ENSMUST00000036473.16">
    <property type="protein sequence ID" value="ENSMUSP00000038722.10"/>
    <property type="gene ID" value="ENSMUSG00000039254.17"/>
</dbReference>
<dbReference type="GeneID" id="99011"/>
<dbReference type="KEGG" id="mmu:99011"/>
<dbReference type="UCSC" id="uc008jeq.1">
    <property type="organism name" value="mouse"/>
</dbReference>
<dbReference type="AGR" id="MGI:2138994"/>
<dbReference type="CTD" id="10585"/>
<dbReference type="MGI" id="MGI:2138994">
    <property type="gene designation" value="Pomt1"/>
</dbReference>
<dbReference type="VEuPathDB" id="HostDB:ENSMUSG00000039254"/>
<dbReference type="eggNOG" id="KOG3359">
    <property type="taxonomic scope" value="Eukaryota"/>
</dbReference>
<dbReference type="GeneTree" id="ENSGT00940000158049"/>
<dbReference type="HOGENOM" id="CLU_008438_1_0_1"/>
<dbReference type="InParanoid" id="Q8R2R1"/>
<dbReference type="OMA" id="NCHLNAP"/>
<dbReference type="OrthoDB" id="292747at2759"/>
<dbReference type="PhylomeDB" id="Q8R2R1"/>
<dbReference type="TreeFam" id="TF300552"/>
<dbReference type="Reactome" id="R-MMU-5173105">
    <property type="pathway name" value="O-linked glycosylation"/>
</dbReference>
<dbReference type="UniPathway" id="UPA00378"/>
<dbReference type="BioGRID-ORCS" id="99011">
    <property type="hits" value="1 hit in 76 CRISPR screens"/>
</dbReference>
<dbReference type="ChiTaRS" id="Pomt1">
    <property type="organism name" value="mouse"/>
</dbReference>
<dbReference type="PRO" id="PR:Q8R2R1"/>
<dbReference type="Proteomes" id="UP000000589">
    <property type="component" value="Chromosome 2"/>
</dbReference>
<dbReference type="RNAct" id="Q8R2R1">
    <property type="molecule type" value="protein"/>
</dbReference>
<dbReference type="Bgee" id="ENSMUSG00000039254">
    <property type="expression patterns" value="Expressed in spermatocyte and 257 other cell types or tissues"/>
</dbReference>
<dbReference type="ExpressionAtlas" id="Q8R2R1">
    <property type="expression patterns" value="baseline and differential"/>
</dbReference>
<dbReference type="GO" id="GO:0001669">
    <property type="term" value="C:acrosomal vesicle"/>
    <property type="evidence" value="ECO:0000314"/>
    <property type="project" value="MGI"/>
</dbReference>
<dbReference type="GO" id="GO:0031502">
    <property type="term" value="C:dolichyl-phosphate-mannose-protein mannosyltransferase complex"/>
    <property type="evidence" value="ECO:0000314"/>
    <property type="project" value="MGI"/>
</dbReference>
<dbReference type="GO" id="GO:0005789">
    <property type="term" value="C:endoplasmic reticulum membrane"/>
    <property type="evidence" value="ECO:0000250"/>
    <property type="project" value="UniProtKB"/>
</dbReference>
<dbReference type="GO" id="GO:0016529">
    <property type="term" value="C:sarcoplasmic reticulum"/>
    <property type="evidence" value="ECO:0000314"/>
    <property type="project" value="MGI"/>
</dbReference>
<dbReference type="GO" id="GO:0004169">
    <property type="term" value="F:dolichyl-phosphate-mannose-protein mannosyltransferase activity"/>
    <property type="evidence" value="ECO:0007669"/>
    <property type="project" value="UniProtKB-EC"/>
</dbReference>
<dbReference type="GO" id="GO:0000030">
    <property type="term" value="F:mannosyltransferase activity"/>
    <property type="evidence" value="ECO:0000250"/>
    <property type="project" value="UniProtKB"/>
</dbReference>
<dbReference type="GO" id="GO:0030198">
    <property type="term" value="P:extracellular matrix organization"/>
    <property type="evidence" value="ECO:0000315"/>
    <property type="project" value="MGI"/>
</dbReference>
<dbReference type="GO" id="GO:0035269">
    <property type="term" value="P:protein O-linked mannosylation"/>
    <property type="evidence" value="ECO:0000250"/>
    <property type="project" value="UniProtKB"/>
</dbReference>
<dbReference type="CDD" id="cd23281">
    <property type="entry name" value="beta-trefoil_MIR_POMT1"/>
    <property type="match status" value="1"/>
</dbReference>
<dbReference type="FunFam" id="2.80.10.50:FF:000012">
    <property type="entry name" value="Protein O-mannosyl-transferase 1"/>
    <property type="match status" value="1"/>
</dbReference>
<dbReference type="Gene3D" id="2.80.10.50">
    <property type="match status" value="1"/>
</dbReference>
<dbReference type="InterPro" id="IPR027005">
    <property type="entry name" value="GlyclTrfase_39-like"/>
</dbReference>
<dbReference type="InterPro" id="IPR003342">
    <property type="entry name" value="Glyco_trans_39/83"/>
</dbReference>
<dbReference type="InterPro" id="IPR036300">
    <property type="entry name" value="MIR_dom_sf"/>
</dbReference>
<dbReference type="InterPro" id="IPR016093">
    <property type="entry name" value="MIR_motif"/>
</dbReference>
<dbReference type="InterPro" id="IPR032421">
    <property type="entry name" value="PMT_4TMC"/>
</dbReference>
<dbReference type="PANTHER" id="PTHR10050">
    <property type="entry name" value="DOLICHYL-PHOSPHATE-MANNOSE--PROTEIN MANNOSYLTRANSFERASE"/>
    <property type="match status" value="1"/>
</dbReference>
<dbReference type="PANTHER" id="PTHR10050:SF51">
    <property type="entry name" value="PROTEIN O-MANNOSYL-TRANSFERASE 1"/>
    <property type="match status" value="1"/>
</dbReference>
<dbReference type="Pfam" id="PF02815">
    <property type="entry name" value="MIR"/>
    <property type="match status" value="1"/>
</dbReference>
<dbReference type="Pfam" id="PF02366">
    <property type="entry name" value="PMT"/>
    <property type="match status" value="1"/>
</dbReference>
<dbReference type="Pfam" id="PF16192">
    <property type="entry name" value="PMT_4TMC"/>
    <property type="match status" value="1"/>
</dbReference>
<dbReference type="SMART" id="SM00472">
    <property type="entry name" value="MIR"/>
    <property type="match status" value="3"/>
</dbReference>
<dbReference type="SUPFAM" id="SSF82109">
    <property type="entry name" value="MIR domain"/>
    <property type="match status" value="1"/>
</dbReference>
<dbReference type="PROSITE" id="PS50919">
    <property type="entry name" value="MIR"/>
    <property type="match status" value="3"/>
</dbReference>
<feature type="chain" id="PRO_0000121485" description="Protein O-mannosyl-transferase 1">
    <location>
        <begin position="1"/>
        <end position="746"/>
    </location>
</feature>
<feature type="transmembrane region" description="Helical" evidence="3">
    <location>
        <begin position="30"/>
        <end position="50"/>
    </location>
</feature>
<feature type="transmembrane region" description="Helical" evidence="3">
    <location>
        <begin position="90"/>
        <end position="110"/>
    </location>
</feature>
<feature type="transmembrane region" description="Helical" evidence="3">
    <location>
        <begin position="121"/>
        <end position="141"/>
    </location>
</feature>
<feature type="transmembrane region" description="Helical" evidence="3">
    <location>
        <begin position="144"/>
        <end position="164"/>
    </location>
</feature>
<feature type="transmembrane region" description="Helical" evidence="3">
    <location>
        <begin position="176"/>
        <end position="196"/>
    </location>
</feature>
<feature type="transmembrane region" description="Helical" evidence="3">
    <location>
        <begin position="228"/>
        <end position="248"/>
    </location>
</feature>
<feature type="transmembrane region" description="Helical" evidence="3">
    <location>
        <begin position="266"/>
        <end position="286"/>
    </location>
</feature>
<feature type="transmembrane region" description="Helical" evidence="3">
    <location>
        <begin position="597"/>
        <end position="617"/>
    </location>
</feature>
<feature type="transmembrane region" description="Helical" evidence="3">
    <location>
        <begin position="636"/>
        <end position="656"/>
    </location>
</feature>
<feature type="transmembrane region" description="Helical" evidence="3">
    <location>
        <begin position="660"/>
        <end position="680"/>
    </location>
</feature>
<feature type="domain" description="MIR 1" evidence="4">
    <location>
        <begin position="318"/>
        <end position="381"/>
    </location>
</feature>
<feature type="domain" description="MIR 2" evidence="4">
    <location>
        <begin position="392"/>
        <end position="449"/>
    </location>
</feature>
<feature type="domain" description="MIR 3" evidence="4">
    <location>
        <begin position="453"/>
        <end position="513"/>
    </location>
</feature>
<feature type="glycosylation site" description="N-linked (GlcNAc...) asparagine" evidence="3">
    <location>
        <position position="435"/>
    </location>
</feature>
<feature type="glycosylation site" description="N-linked (GlcNAc...) asparagine" evidence="3">
    <location>
        <position position="471"/>
    </location>
</feature>
<feature type="glycosylation site" description="N-linked (GlcNAc...) asparagine" evidence="3">
    <location>
        <position position="539"/>
    </location>
</feature>
<feature type="sequence conflict" description="In Ref. 3; BAC35577." evidence="6" ref="3">
    <original>G</original>
    <variation>S</variation>
    <location>
        <position position="2"/>
    </location>
</feature>
<feature type="sequence conflict" description="In Ref. 1; AAG15588." evidence="6" ref="1">
    <original>R</original>
    <variation>P</variation>
    <location>
        <position position="257"/>
    </location>
</feature>
<feature type="sequence conflict" description="In Ref. 3; BAE22274." evidence="6" ref="3">
    <original>P</original>
    <variation>H</variation>
    <location>
        <position position="318"/>
    </location>
</feature>
<feature type="sequence conflict" description="In Ref. 1; AAG15588." evidence="6" ref="1">
    <original>K</original>
    <variation>E</variation>
    <location>
        <position position="330"/>
    </location>
</feature>
<sequence length="746" mass="85234">MGSHSTGLEETLGVLPSWLFCKMLRFLKRPLVVTVDINLNLVALTGLGLLTRLWQLSYPRAVVFDEVYYGQYISFYMKRIFFLDDSGPPFGHMLLALGGWLGGFDGNFLWNRIGAEYSSNVPIWSLRLLPALAGALSVPMAYQIVLELHFSHGAAIGAALLMLIENALITQSRLMLLESILIFFNLLAVLSYLKFFNSQTHSPFSVHWWLWLLLTGVSCSCAVGIKYMGIFTYLLVLGIAAVHAWNLIGDQTLSNMRVLSHLLARIVALLVVPVFLYLLFFYVHLMLLYRSGPHDQIMSSAFQASLEGGLARITQGQPLEVAFGSQVTLKSVSGKPLPCWLHSHKNTYPMIYENGRGSSHQQQVTCYPFKDINNWWIVKDPGRHQLVVNNPPRPVRHGDIVQLVHGMTTRLLNTHDVAAPLSPHSQEVSCYIDYNISMPAQNLWKLDIVNRESNRDTWKTILSEVRFVHVNTSAILKLSGAHLPDWGFRQLEVVGEKLSPGYHESMVWNVEEHRYGKSHEQKERELELHSPTQLDISRNLSFMARFSELQWKMLTLKNEDLEHQYSSTPLEWLTLDTNIAYWLHPRTSAQIHLLGNIVIWTSASLATVVYTLLFFWYLLRRRRSICDLPEDAWSRWVLAGALCTGGWALNYLPFFLMERVLFLYHYLPALTFQILLLPIVLQHASDHLCRSQLQRNVFSALVVAWYSSACHVSNMLRPLTYGDTSLSPGELRALRWKDSWDILIRK</sequence>
<accession>Q8R2R1</accession>
<accession>Q3UYD8</accession>
<accession>Q64J18</accession>
<accession>Q8BPJ6</accession>
<accession>Q8BPU1</accession>
<accession>Q8R474</accession>
<name>POMT1_MOUSE</name>
<reference key="1">
    <citation type="submission" date="2000-08" db="EMBL/GenBank/DDBJ databases">
        <title>A putative mouse O-mannosyltransferase mPOMT1.</title>
        <authorList>
            <person name="Wang X."/>
            <person name="Jigami Y."/>
        </authorList>
    </citation>
    <scope>NUCLEOTIDE SEQUENCE [MRNA]</scope>
    <source>
        <strain>BALB/cJ</strain>
    </source>
</reference>
<reference key="2">
    <citation type="journal article" date="2004" name="Proc. Natl. Acad. Sci. U.S.A.">
        <title>Targeted disruption of the Walker-Warburg syndrome gene Pomt1 in mouse results in embryonic lethality.</title>
        <authorList>
            <person name="Willer T."/>
            <person name="Prados B."/>
            <person name="Falcon-Perez J.M."/>
            <person name="Renner-Mueller I."/>
            <person name="Przemeck G.K.H."/>
            <person name="Lommel M."/>
            <person name="Coloma A."/>
            <person name="Valero M.C."/>
            <person name="De Angelis M.H."/>
            <person name="Tanner W."/>
            <person name="Wolf E."/>
            <person name="Strahl S."/>
            <person name="Cruces J."/>
        </authorList>
    </citation>
    <scope>NUCLEOTIDE SEQUENCE [MRNA]</scope>
    <scope>DEVELOPMENTAL STAGE</scope>
    <scope>DISRUPTION PHENOTYPE</scope>
    <source>
        <strain>Swiss Webster / NIH</strain>
        <tissue>Embryo</tissue>
    </source>
</reference>
<reference key="3">
    <citation type="journal article" date="2005" name="Science">
        <title>The transcriptional landscape of the mammalian genome.</title>
        <authorList>
            <person name="Carninci P."/>
            <person name="Kasukawa T."/>
            <person name="Katayama S."/>
            <person name="Gough J."/>
            <person name="Frith M.C."/>
            <person name="Maeda N."/>
            <person name="Oyama R."/>
            <person name="Ravasi T."/>
            <person name="Lenhard B."/>
            <person name="Wells C."/>
            <person name="Kodzius R."/>
            <person name="Shimokawa K."/>
            <person name="Bajic V.B."/>
            <person name="Brenner S.E."/>
            <person name="Batalov S."/>
            <person name="Forrest A.R."/>
            <person name="Zavolan M."/>
            <person name="Davis M.J."/>
            <person name="Wilming L.G."/>
            <person name="Aidinis V."/>
            <person name="Allen J.E."/>
            <person name="Ambesi-Impiombato A."/>
            <person name="Apweiler R."/>
            <person name="Aturaliya R.N."/>
            <person name="Bailey T.L."/>
            <person name="Bansal M."/>
            <person name="Baxter L."/>
            <person name="Beisel K.W."/>
            <person name="Bersano T."/>
            <person name="Bono H."/>
            <person name="Chalk A.M."/>
            <person name="Chiu K.P."/>
            <person name="Choudhary V."/>
            <person name="Christoffels A."/>
            <person name="Clutterbuck D.R."/>
            <person name="Crowe M.L."/>
            <person name="Dalla E."/>
            <person name="Dalrymple B.P."/>
            <person name="de Bono B."/>
            <person name="Della Gatta G."/>
            <person name="di Bernardo D."/>
            <person name="Down T."/>
            <person name="Engstrom P."/>
            <person name="Fagiolini M."/>
            <person name="Faulkner G."/>
            <person name="Fletcher C.F."/>
            <person name="Fukushima T."/>
            <person name="Furuno M."/>
            <person name="Futaki S."/>
            <person name="Gariboldi M."/>
            <person name="Georgii-Hemming P."/>
            <person name="Gingeras T.R."/>
            <person name="Gojobori T."/>
            <person name="Green R.E."/>
            <person name="Gustincich S."/>
            <person name="Harbers M."/>
            <person name="Hayashi Y."/>
            <person name="Hensch T.K."/>
            <person name="Hirokawa N."/>
            <person name="Hill D."/>
            <person name="Huminiecki L."/>
            <person name="Iacono M."/>
            <person name="Ikeo K."/>
            <person name="Iwama A."/>
            <person name="Ishikawa T."/>
            <person name="Jakt M."/>
            <person name="Kanapin A."/>
            <person name="Katoh M."/>
            <person name="Kawasawa Y."/>
            <person name="Kelso J."/>
            <person name="Kitamura H."/>
            <person name="Kitano H."/>
            <person name="Kollias G."/>
            <person name="Krishnan S.P."/>
            <person name="Kruger A."/>
            <person name="Kummerfeld S.K."/>
            <person name="Kurochkin I.V."/>
            <person name="Lareau L.F."/>
            <person name="Lazarevic D."/>
            <person name="Lipovich L."/>
            <person name="Liu J."/>
            <person name="Liuni S."/>
            <person name="McWilliam S."/>
            <person name="Madan Babu M."/>
            <person name="Madera M."/>
            <person name="Marchionni L."/>
            <person name="Matsuda H."/>
            <person name="Matsuzawa S."/>
            <person name="Miki H."/>
            <person name="Mignone F."/>
            <person name="Miyake S."/>
            <person name="Morris K."/>
            <person name="Mottagui-Tabar S."/>
            <person name="Mulder N."/>
            <person name="Nakano N."/>
            <person name="Nakauchi H."/>
            <person name="Ng P."/>
            <person name="Nilsson R."/>
            <person name="Nishiguchi S."/>
            <person name="Nishikawa S."/>
            <person name="Nori F."/>
            <person name="Ohara O."/>
            <person name="Okazaki Y."/>
            <person name="Orlando V."/>
            <person name="Pang K.C."/>
            <person name="Pavan W.J."/>
            <person name="Pavesi G."/>
            <person name="Pesole G."/>
            <person name="Petrovsky N."/>
            <person name="Piazza S."/>
            <person name="Reed J."/>
            <person name="Reid J.F."/>
            <person name="Ring B.Z."/>
            <person name="Ringwald M."/>
            <person name="Rost B."/>
            <person name="Ruan Y."/>
            <person name="Salzberg S.L."/>
            <person name="Sandelin A."/>
            <person name="Schneider C."/>
            <person name="Schoenbach C."/>
            <person name="Sekiguchi K."/>
            <person name="Semple C.A."/>
            <person name="Seno S."/>
            <person name="Sessa L."/>
            <person name="Sheng Y."/>
            <person name="Shibata Y."/>
            <person name="Shimada H."/>
            <person name="Shimada K."/>
            <person name="Silva D."/>
            <person name="Sinclair B."/>
            <person name="Sperling S."/>
            <person name="Stupka E."/>
            <person name="Sugiura K."/>
            <person name="Sultana R."/>
            <person name="Takenaka Y."/>
            <person name="Taki K."/>
            <person name="Tammoja K."/>
            <person name="Tan S.L."/>
            <person name="Tang S."/>
            <person name="Taylor M.S."/>
            <person name="Tegner J."/>
            <person name="Teichmann S.A."/>
            <person name="Ueda H.R."/>
            <person name="van Nimwegen E."/>
            <person name="Verardo R."/>
            <person name="Wei C.L."/>
            <person name="Yagi K."/>
            <person name="Yamanishi H."/>
            <person name="Zabarovsky E."/>
            <person name="Zhu S."/>
            <person name="Zimmer A."/>
            <person name="Hide W."/>
            <person name="Bult C."/>
            <person name="Grimmond S.M."/>
            <person name="Teasdale R.D."/>
            <person name="Liu E.T."/>
            <person name="Brusic V."/>
            <person name="Quackenbush J."/>
            <person name="Wahlestedt C."/>
            <person name="Mattick J.S."/>
            <person name="Hume D.A."/>
            <person name="Kai C."/>
            <person name="Sasaki D."/>
            <person name="Tomaru Y."/>
            <person name="Fukuda S."/>
            <person name="Kanamori-Katayama M."/>
            <person name="Suzuki M."/>
            <person name="Aoki J."/>
            <person name="Arakawa T."/>
            <person name="Iida J."/>
            <person name="Imamura K."/>
            <person name="Itoh M."/>
            <person name="Kato T."/>
            <person name="Kawaji H."/>
            <person name="Kawagashira N."/>
            <person name="Kawashima T."/>
            <person name="Kojima M."/>
            <person name="Kondo S."/>
            <person name="Konno H."/>
            <person name="Nakano K."/>
            <person name="Ninomiya N."/>
            <person name="Nishio T."/>
            <person name="Okada M."/>
            <person name="Plessy C."/>
            <person name="Shibata K."/>
            <person name="Shiraki T."/>
            <person name="Suzuki S."/>
            <person name="Tagami M."/>
            <person name="Waki K."/>
            <person name="Watahiki A."/>
            <person name="Okamura-Oho Y."/>
            <person name="Suzuki H."/>
            <person name="Kawai J."/>
            <person name="Hayashizaki Y."/>
        </authorList>
    </citation>
    <scope>NUCLEOTIDE SEQUENCE [LARGE SCALE MRNA]</scope>
    <source>
        <strain>C57BL/6J</strain>
        <strain>NOD</strain>
        <tissue>Eye</tissue>
        <tissue>Medulla oblongata</tissue>
        <tissue>Thymus</tissue>
    </source>
</reference>
<reference key="4">
    <citation type="journal article" date="2004" name="Genome Res.">
        <title>The status, quality, and expansion of the NIH full-length cDNA project: the Mammalian Gene Collection (MGC).</title>
        <authorList>
            <consortium name="The MGC Project Team"/>
        </authorList>
    </citation>
    <scope>NUCLEOTIDE SEQUENCE [LARGE SCALE MRNA]</scope>
    <source>
        <strain>FVB/N</strain>
        <tissue>Mammary gland</tissue>
    </source>
</reference>
<reference key="5">
    <citation type="journal article" date="2010" name="Cell">
        <title>A tissue-specific atlas of mouse protein phosphorylation and expression.</title>
        <authorList>
            <person name="Huttlin E.L."/>
            <person name="Jedrychowski M.P."/>
            <person name="Elias J.E."/>
            <person name="Goswami T."/>
            <person name="Rad R."/>
            <person name="Beausoleil S.A."/>
            <person name="Villen J."/>
            <person name="Haas W."/>
            <person name="Sowa M.E."/>
            <person name="Gygi S.P."/>
        </authorList>
    </citation>
    <scope>IDENTIFICATION BY MASS SPECTROMETRY [LARGE SCALE ANALYSIS]</scope>
    <source>
        <tissue>Testis</tissue>
    </source>
</reference>
<evidence type="ECO:0000250" key="1"/>
<evidence type="ECO:0000250" key="2">
    <source>
        <dbReference type="UniProtKB" id="Q9Y6A1"/>
    </source>
</evidence>
<evidence type="ECO:0000255" key="3"/>
<evidence type="ECO:0000255" key="4">
    <source>
        <dbReference type="PROSITE-ProRule" id="PRU00131"/>
    </source>
</evidence>
<evidence type="ECO:0000269" key="5">
    <source>
    </source>
</evidence>
<evidence type="ECO:0000305" key="6"/>
<proteinExistence type="evidence at protein level"/>
<keyword id="KW-0256">Endoplasmic reticulum</keyword>
<keyword id="KW-0325">Glycoprotein</keyword>
<keyword id="KW-0328">Glycosyltransferase</keyword>
<keyword id="KW-0472">Membrane</keyword>
<keyword id="KW-1185">Reference proteome</keyword>
<keyword id="KW-0677">Repeat</keyword>
<keyword id="KW-0808">Transferase</keyword>
<keyword id="KW-0812">Transmembrane</keyword>
<keyword id="KW-1133">Transmembrane helix</keyword>